<organism>
    <name type="scientific">Oryza sativa subsp. japonica</name>
    <name type="common">Rice</name>
    <dbReference type="NCBI Taxonomy" id="39947"/>
    <lineage>
        <taxon>Eukaryota</taxon>
        <taxon>Viridiplantae</taxon>
        <taxon>Streptophyta</taxon>
        <taxon>Embryophyta</taxon>
        <taxon>Tracheophyta</taxon>
        <taxon>Spermatophyta</taxon>
        <taxon>Magnoliopsida</taxon>
        <taxon>Liliopsida</taxon>
        <taxon>Poales</taxon>
        <taxon>Poaceae</taxon>
        <taxon>BOP clade</taxon>
        <taxon>Oryzoideae</taxon>
        <taxon>Oryzeae</taxon>
        <taxon>Oryzinae</taxon>
        <taxon>Oryza</taxon>
        <taxon>Oryza sativa</taxon>
    </lineage>
</organism>
<name>OML6_ORYSJ</name>
<sequence>MSCLSRLNASAAPWEPPVARAMAVEQYCPPPQSLLPPPPLPPVAVPTTCGCAACLQGCFVPVGVQAAFPHAAAGCAPPPPVMPVMIVYRVVQPPPPAAHATRCQITEIEDGGGVETAKAVDGDEPQPFIRTVRSTRRRKAAAIRLPKAFRAALLPPPPPPCALGFTATTTSLMIRNIPNKFLKARLMAILDQHCADENGKCHRRGGGGGRSVVKSEYDFFYVPIDFKTGFNKGYAFVNMTTATAARRLRAFLQDHRWDAAMSGKVCDVVPAAIQGLDAFVAHFSASCFPCRTKEFLPVWFEPPRDGEQQTKAHVVGRLVVRPR</sequence>
<reference key="1">
    <citation type="journal article" date="2006" name="Plant Cell">
        <title>PLASTOCHRON2 regulates leaf initiation and maturation in rice.</title>
        <authorList>
            <person name="Kawakatsu T."/>
            <person name="Itoh J."/>
            <person name="Miyoshi K."/>
            <person name="Kurata N."/>
            <person name="Alvarez N."/>
            <person name="Veit B."/>
            <person name="Nagato Y."/>
        </authorList>
    </citation>
    <scope>NUCLEOTIDE SEQUENCE [MRNA]</scope>
    <source>
        <strain>cv. Nipponbare</strain>
    </source>
</reference>
<reference key="2">
    <citation type="journal article" date="2005" name="Nature">
        <title>The map-based sequence of the rice genome.</title>
        <authorList>
            <consortium name="International rice genome sequencing project (IRGSP)"/>
        </authorList>
    </citation>
    <scope>NUCLEOTIDE SEQUENCE [LARGE SCALE GENOMIC DNA]</scope>
    <source>
        <strain>cv. Nipponbare</strain>
    </source>
</reference>
<reference key="3">
    <citation type="journal article" date="2008" name="Nucleic Acids Res.">
        <title>The rice annotation project database (RAP-DB): 2008 update.</title>
        <authorList>
            <consortium name="The rice annotation project (RAP)"/>
        </authorList>
    </citation>
    <scope>GENOME REANNOTATION</scope>
    <source>
        <strain>cv. Nipponbare</strain>
    </source>
</reference>
<reference key="4">
    <citation type="journal article" date="2013" name="Rice">
        <title>Improvement of the Oryza sativa Nipponbare reference genome using next generation sequence and optical map data.</title>
        <authorList>
            <person name="Kawahara Y."/>
            <person name="de la Bastide M."/>
            <person name="Hamilton J.P."/>
            <person name="Kanamori H."/>
            <person name="McCombie W.R."/>
            <person name="Ouyang S."/>
            <person name="Schwartz D.C."/>
            <person name="Tanaka T."/>
            <person name="Wu J."/>
            <person name="Zhou S."/>
            <person name="Childs K.L."/>
            <person name="Davidson R.M."/>
            <person name="Lin H."/>
            <person name="Quesada-Ocampo L."/>
            <person name="Vaillancourt B."/>
            <person name="Sakai H."/>
            <person name="Lee S.S."/>
            <person name="Kim J."/>
            <person name="Numa H."/>
            <person name="Itoh T."/>
            <person name="Buell C.R."/>
            <person name="Matsumoto T."/>
        </authorList>
    </citation>
    <scope>GENOME REANNOTATION</scope>
    <source>
        <strain>cv. Nipponbare</strain>
    </source>
</reference>
<reference key="5">
    <citation type="journal article" date="2004" name="Plant Mol. Biol.">
        <title>Diversification of genes encoding mei2 -like RNA binding proteins in plants.</title>
        <authorList>
            <person name="Anderson G.H."/>
            <person name="Alvarez N.D."/>
            <person name="Gilman C."/>
            <person name="Jeffares D.C."/>
            <person name="Trainor V.C."/>
            <person name="Hanson M.R."/>
            <person name="Veit B."/>
        </authorList>
    </citation>
    <scope>GENE FAMILY</scope>
</reference>
<dbReference type="EMBL" id="AB244281">
    <property type="protein sequence ID" value="BAE79768.1"/>
    <property type="molecule type" value="mRNA"/>
</dbReference>
<dbReference type="EMBL" id="AP005567">
    <property type="protein sequence ID" value="BAD46261.1"/>
    <property type="molecule type" value="Genomic_DNA"/>
</dbReference>
<dbReference type="EMBL" id="AP008215">
    <property type="protein sequence ID" value="BAF25668.1"/>
    <property type="molecule type" value="Genomic_DNA"/>
</dbReference>
<dbReference type="EMBL" id="AP014965">
    <property type="protein sequence ID" value="BAT09101.1"/>
    <property type="molecule type" value="Genomic_DNA"/>
</dbReference>
<dbReference type="RefSeq" id="XP_015611521.1">
    <property type="nucleotide sequence ID" value="XM_015756035.1"/>
</dbReference>
<dbReference type="SMR" id="Q652K6"/>
<dbReference type="PaxDb" id="39947-Q652K6"/>
<dbReference type="EnsemblPlants" id="Os09t0531200-01">
    <property type="protein sequence ID" value="Os09t0531200-01"/>
    <property type="gene ID" value="Os09g0531200"/>
</dbReference>
<dbReference type="Gramene" id="Os09t0531200-01">
    <property type="protein sequence ID" value="Os09t0531200-01"/>
    <property type="gene ID" value="Os09g0531200"/>
</dbReference>
<dbReference type="KEGG" id="dosa:Os09g0531200"/>
<dbReference type="eggNOG" id="KOG4660">
    <property type="taxonomic scope" value="Eukaryota"/>
</dbReference>
<dbReference type="HOGENOM" id="CLU_048816_0_0_1"/>
<dbReference type="InParanoid" id="Q652K6"/>
<dbReference type="OrthoDB" id="417481at2759"/>
<dbReference type="Proteomes" id="UP000000763">
    <property type="component" value="Chromosome 9"/>
</dbReference>
<dbReference type="Proteomes" id="UP000059680">
    <property type="component" value="Chromosome 9"/>
</dbReference>
<dbReference type="GO" id="GO:1990904">
    <property type="term" value="C:ribonucleoprotein complex"/>
    <property type="evidence" value="ECO:0000318"/>
    <property type="project" value="GO_Central"/>
</dbReference>
<dbReference type="GO" id="GO:0003723">
    <property type="term" value="F:RNA binding"/>
    <property type="evidence" value="ECO:0000318"/>
    <property type="project" value="GO_Central"/>
</dbReference>
<dbReference type="CDD" id="cd12277">
    <property type="entry name" value="RRM3_MEI2_EAR1_like"/>
    <property type="match status" value="1"/>
</dbReference>
<dbReference type="InterPro" id="IPR007201">
    <property type="entry name" value="Mei2-like_Rrm_C"/>
</dbReference>
<dbReference type="InterPro" id="IPR035979">
    <property type="entry name" value="RBD_domain_sf"/>
</dbReference>
<dbReference type="Pfam" id="PF04059">
    <property type="entry name" value="RRM_2"/>
    <property type="match status" value="1"/>
</dbReference>
<dbReference type="SUPFAM" id="SSF54928">
    <property type="entry name" value="RNA-binding domain, RBD"/>
    <property type="match status" value="1"/>
</dbReference>
<keyword id="KW-1185">Reference proteome</keyword>
<proteinExistence type="evidence at transcript level"/>
<feature type="chain" id="PRO_0000409350" description="Protein MEI2-like 6">
    <location>
        <begin position="1"/>
        <end position="323"/>
    </location>
</feature>
<accession>Q652K6</accession>
<accession>A0A0P0XPG1</accession>
<gene>
    <name type="primary">ML6</name>
    <name type="ordered locus">Os09g0531200</name>
    <name type="ordered locus">LOC_Os09g36140</name>
    <name type="ORF">OJ1254_E07.9</name>
</gene>
<protein>
    <recommendedName>
        <fullName>Protein MEI2-like 6</fullName>
        <shortName>OML6</shortName>
    </recommendedName>
    <alternativeName>
        <fullName>MEI2-like protein 6</fullName>
    </alternativeName>
</protein>